<organism>
    <name type="scientific">Agrobacterium fabrum (strain C58 / ATCC 33970)</name>
    <name type="common">Agrobacterium tumefaciens (strain C58)</name>
    <dbReference type="NCBI Taxonomy" id="176299"/>
    <lineage>
        <taxon>Bacteria</taxon>
        <taxon>Pseudomonadati</taxon>
        <taxon>Pseudomonadota</taxon>
        <taxon>Alphaproteobacteria</taxon>
        <taxon>Hyphomicrobiales</taxon>
        <taxon>Rhizobiaceae</taxon>
        <taxon>Rhizobium/Agrobacterium group</taxon>
        <taxon>Agrobacterium</taxon>
        <taxon>Agrobacterium tumefaciens complex</taxon>
    </lineage>
</organism>
<protein>
    <recommendedName>
        <fullName evidence="1">DNA-directed RNA polymerase subunit omega</fullName>
        <shortName evidence="1">RNAP omega subunit</shortName>
        <ecNumber evidence="1">2.7.7.6</ecNumber>
    </recommendedName>
    <alternativeName>
        <fullName evidence="1">RNA polymerase omega subunit</fullName>
    </alternativeName>
    <alternativeName>
        <fullName evidence="1">Transcriptase subunit omega</fullName>
    </alternativeName>
</protein>
<feature type="chain" id="PRO_0000128910" description="DNA-directed RNA polymerase subunit omega">
    <location>
        <begin position="1"/>
        <end position="129"/>
    </location>
</feature>
<feature type="region of interest" description="Disordered" evidence="2">
    <location>
        <begin position="76"/>
        <end position="101"/>
    </location>
</feature>
<name>RPOZ_AGRFC</name>
<reference key="1">
    <citation type="journal article" date="2001" name="Science">
        <title>The genome of the natural genetic engineer Agrobacterium tumefaciens C58.</title>
        <authorList>
            <person name="Wood D.W."/>
            <person name="Setubal J.C."/>
            <person name="Kaul R."/>
            <person name="Monks D.E."/>
            <person name="Kitajima J.P."/>
            <person name="Okura V.K."/>
            <person name="Zhou Y."/>
            <person name="Chen L."/>
            <person name="Wood G.E."/>
            <person name="Almeida N.F. Jr."/>
            <person name="Woo L."/>
            <person name="Chen Y."/>
            <person name="Paulsen I.T."/>
            <person name="Eisen J.A."/>
            <person name="Karp P.D."/>
            <person name="Bovee D. Sr."/>
            <person name="Chapman P."/>
            <person name="Clendenning J."/>
            <person name="Deatherage G."/>
            <person name="Gillet W."/>
            <person name="Grant C."/>
            <person name="Kutyavin T."/>
            <person name="Levy R."/>
            <person name="Li M.-J."/>
            <person name="McClelland E."/>
            <person name="Palmieri A."/>
            <person name="Raymond C."/>
            <person name="Rouse G."/>
            <person name="Saenphimmachak C."/>
            <person name="Wu Z."/>
            <person name="Romero P."/>
            <person name="Gordon D."/>
            <person name="Zhang S."/>
            <person name="Yoo H."/>
            <person name="Tao Y."/>
            <person name="Biddle P."/>
            <person name="Jung M."/>
            <person name="Krespan W."/>
            <person name="Perry M."/>
            <person name="Gordon-Kamm B."/>
            <person name="Liao L."/>
            <person name="Kim S."/>
            <person name="Hendrick C."/>
            <person name="Zhao Z.-Y."/>
            <person name="Dolan M."/>
            <person name="Chumley F."/>
            <person name="Tingey S.V."/>
            <person name="Tomb J.-F."/>
            <person name="Gordon M.P."/>
            <person name="Olson M.V."/>
            <person name="Nester E.W."/>
        </authorList>
    </citation>
    <scope>NUCLEOTIDE SEQUENCE [LARGE SCALE GENOMIC DNA]</scope>
    <source>
        <strain>C58 / ATCC 33970</strain>
    </source>
</reference>
<reference key="2">
    <citation type="journal article" date="2001" name="Science">
        <title>Genome sequence of the plant pathogen and biotechnology agent Agrobacterium tumefaciens C58.</title>
        <authorList>
            <person name="Goodner B."/>
            <person name="Hinkle G."/>
            <person name="Gattung S."/>
            <person name="Miller N."/>
            <person name="Blanchard M."/>
            <person name="Qurollo B."/>
            <person name="Goldman B.S."/>
            <person name="Cao Y."/>
            <person name="Askenazi M."/>
            <person name="Halling C."/>
            <person name="Mullin L."/>
            <person name="Houmiel K."/>
            <person name="Gordon J."/>
            <person name="Vaudin M."/>
            <person name="Iartchouk O."/>
            <person name="Epp A."/>
            <person name="Liu F."/>
            <person name="Wollam C."/>
            <person name="Allinger M."/>
            <person name="Doughty D."/>
            <person name="Scott C."/>
            <person name="Lappas C."/>
            <person name="Markelz B."/>
            <person name="Flanagan C."/>
            <person name="Crowell C."/>
            <person name="Gurson J."/>
            <person name="Lomo C."/>
            <person name="Sear C."/>
            <person name="Strub G."/>
            <person name="Cielo C."/>
            <person name="Slater S."/>
        </authorList>
    </citation>
    <scope>NUCLEOTIDE SEQUENCE [LARGE SCALE GENOMIC DNA]</scope>
    <source>
        <strain>C58 / ATCC 33970</strain>
    </source>
</reference>
<sequence>MARVTVEDCIDKVDNRFELVLLASHRARQISQGSSITVDRDNDKNPVVALREIADETLSPDDLKEDLIHSLQKHVEVDEPEPDPVTLAASAADGEDDDQPETVTFDQMSEEELLAGIEGLVPPEKNDDY</sequence>
<keyword id="KW-0240">DNA-directed RNA polymerase</keyword>
<keyword id="KW-0548">Nucleotidyltransferase</keyword>
<keyword id="KW-1185">Reference proteome</keyword>
<keyword id="KW-0804">Transcription</keyword>
<keyword id="KW-0808">Transferase</keyword>
<evidence type="ECO:0000255" key="1">
    <source>
        <dbReference type="HAMAP-Rule" id="MF_00366"/>
    </source>
</evidence>
<evidence type="ECO:0000256" key="2">
    <source>
        <dbReference type="SAM" id="MobiDB-lite"/>
    </source>
</evidence>
<comment type="function">
    <text evidence="1">Promotes RNA polymerase assembly. Latches the N- and C-terminal regions of the beta' subunit thereby facilitating its interaction with the beta and alpha subunits.</text>
</comment>
<comment type="catalytic activity">
    <reaction evidence="1">
        <text>RNA(n) + a ribonucleoside 5'-triphosphate = RNA(n+1) + diphosphate</text>
        <dbReference type="Rhea" id="RHEA:21248"/>
        <dbReference type="Rhea" id="RHEA-COMP:14527"/>
        <dbReference type="Rhea" id="RHEA-COMP:17342"/>
        <dbReference type="ChEBI" id="CHEBI:33019"/>
        <dbReference type="ChEBI" id="CHEBI:61557"/>
        <dbReference type="ChEBI" id="CHEBI:140395"/>
        <dbReference type="EC" id="2.7.7.6"/>
    </reaction>
</comment>
<comment type="subunit">
    <text evidence="1">The RNAP catalytic core consists of 2 alpha, 1 beta, 1 beta' and 1 omega subunit. When a sigma factor is associated with the core the holoenzyme is formed, which can initiate transcription.</text>
</comment>
<comment type="similarity">
    <text evidence="1">Belongs to the RNA polymerase subunit omega family.</text>
</comment>
<dbReference type="EC" id="2.7.7.6" evidence="1"/>
<dbReference type="EMBL" id="AE007869">
    <property type="protein sequence ID" value="AAK86837.2"/>
    <property type="molecule type" value="Genomic_DNA"/>
</dbReference>
<dbReference type="PIR" id="AD2703">
    <property type="entry name" value="AD2703"/>
</dbReference>
<dbReference type="PIR" id="D97485">
    <property type="entry name" value="D97485"/>
</dbReference>
<dbReference type="RefSeq" id="NP_354052.2">
    <property type="nucleotide sequence ID" value="NC_003062.2"/>
</dbReference>
<dbReference type="RefSeq" id="WP_006311530.1">
    <property type="nucleotide sequence ID" value="NC_003062.2"/>
</dbReference>
<dbReference type="SMR" id="Q8UGK8"/>
<dbReference type="STRING" id="176299.Atu1029"/>
<dbReference type="EnsemblBacteria" id="AAK86837">
    <property type="protein sequence ID" value="AAK86837"/>
    <property type="gene ID" value="Atu1029"/>
</dbReference>
<dbReference type="GeneID" id="1133067"/>
<dbReference type="KEGG" id="atu:Atu1029"/>
<dbReference type="PATRIC" id="fig|176299.10.peg.1041"/>
<dbReference type="eggNOG" id="COG1758">
    <property type="taxonomic scope" value="Bacteria"/>
</dbReference>
<dbReference type="HOGENOM" id="CLU_125406_2_0_5"/>
<dbReference type="OrthoDB" id="9796300at2"/>
<dbReference type="PhylomeDB" id="Q8UGK8"/>
<dbReference type="BioCyc" id="AGRO:ATU1029-MONOMER"/>
<dbReference type="Proteomes" id="UP000000813">
    <property type="component" value="Chromosome circular"/>
</dbReference>
<dbReference type="GO" id="GO:0000428">
    <property type="term" value="C:DNA-directed RNA polymerase complex"/>
    <property type="evidence" value="ECO:0007669"/>
    <property type="project" value="UniProtKB-KW"/>
</dbReference>
<dbReference type="GO" id="GO:0003677">
    <property type="term" value="F:DNA binding"/>
    <property type="evidence" value="ECO:0007669"/>
    <property type="project" value="UniProtKB-UniRule"/>
</dbReference>
<dbReference type="GO" id="GO:0003899">
    <property type="term" value="F:DNA-directed RNA polymerase activity"/>
    <property type="evidence" value="ECO:0007669"/>
    <property type="project" value="UniProtKB-UniRule"/>
</dbReference>
<dbReference type="GO" id="GO:0006351">
    <property type="term" value="P:DNA-templated transcription"/>
    <property type="evidence" value="ECO:0007669"/>
    <property type="project" value="UniProtKB-UniRule"/>
</dbReference>
<dbReference type="Gene3D" id="3.90.940.10">
    <property type="match status" value="1"/>
</dbReference>
<dbReference type="HAMAP" id="MF_00366">
    <property type="entry name" value="RNApol_bact_RpoZ"/>
    <property type="match status" value="1"/>
</dbReference>
<dbReference type="InterPro" id="IPR003716">
    <property type="entry name" value="DNA-dir_RNA_pol_omega"/>
</dbReference>
<dbReference type="InterPro" id="IPR006110">
    <property type="entry name" value="Pol_omega/Rpo6/RPB6"/>
</dbReference>
<dbReference type="InterPro" id="IPR036161">
    <property type="entry name" value="RPB6/omega-like_sf"/>
</dbReference>
<dbReference type="NCBIfam" id="TIGR00690">
    <property type="entry name" value="rpoZ"/>
    <property type="match status" value="1"/>
</dbReference>
<dbReference type="PANTHER" id="PTHR34476">
    <property type="entry name" value="DNA-DIRECTED RNA POLYMERASE SUBUNIT OMEGA"/>
    <property type="match status" value="1"/>
</dbReference>
<dbReference type="PANTHER" id="PTHR34476:SF1">
    <property type="entry name" value="DNA-DIRECTED RNA POLYMERASE SUBUNIT OMEGA"/>
    <property type="match status" value="1"/>
</dbReference>
<dbReference type="Pfam" id="PF01192">
    <property type="entry name" value="RNA_pol_Rpb6"/>
    <property type="match status" value="1"/>
</dbReference>
<dbReference type="SMART" id="SM01409">
    <property type="entry name" value="RNA_pol_Rpb6"/>
    <property type="match status" value="1"/>
</dbReference>
<dbReference type="SUPFAM" id="SSF63562">
    <property type="entry name" value="RPB6/omega subunit-like"/>
    <property type="match status" value="1"/>
</dbReference>
<gene>
    <name evidence="1" type="primary">rpoZ</name>
    <name type="synonym">rnpO</name>
    <name type="ordered locus">Atu1029</name>
    <name type="ORF">AGR_C_1894</name>
</gene>
<accession>Q8UGK8</accession>
<proteinExistence type="inferred from homology"/>